<gene>
    <name type="primary">Ibsp</name>
</gene>
<keyword id="KW-0091">Biomineralization</keyword>
<keyword id="KW-0130">Cell adhesion</keyword>
<keyword id="KW-0325">Glycoprotein</keyword>
<keyword id="KW-0597">Phosphoprotein</keyword>
<keyword id="KW-1185">Reference proteome</keyword>
<keyword id="KW-0964">Secreted</keyword>
<keyword id="KW-0730">Sialic acid</keyword>
<keyword id="KW-0732">Signal</keyword>
<keyword id="KW-0765">Sulfation</keyword>
<sequence>MKTALILLSILGMACAFSMKNFHRRIKAEDSEENGVFKYRPRYFLYKHAYFYPPLKRFPVQGGSDSSEENGDGDSSEEEGEEEETSNEEENNEDSEGNEDQEAEAENSTLSTLSGVTASYGAETTPQAQTFELAALQLPKKAGDAESRAPKVKESDEEEEEEEEEEENENEEAEVDENELAVNGTSTNSTEVDGGNGSSGGDNGEEAEAEEASVTEAGAEGTTGGRELTSVGTQTAVLLNGFQQTTPPPEAYGTTSPPIRKSSTVEYGGEYEQTGNEYNNEYEVYDNENGEPRGDTYRAYEDEYSYYKGHGYEGYEGQNYYYHQ</sequence>
<comment type="function">
    <text evidence="1">Binds tightly to hydroxyapatite. Appears to form an integral part of the mineralized matrix. Probably important to cell-matrix interaction. Promotes adhesion and migration of various cells via the alpha-V/beta-3 integrin receptor (ITGAV:ITGB3).</text>
</comment>
<comment type="subunit">
    <text evidence="1 2">Monomer (By similarity). Interacts with integrins; the interaction promotes cell adhesion (By similarity).</text>
</comment>
<comment type="subcellular location">
    <subcellularLocation>
        <location evidence="1">Secreted</location>
    </subcellularLocation>
</comment>
<comment type="domain">
    <text evidence="1">The Arg-Gly-Asp (RGD) sequence serves as an integrin-binding motif and is required for integrin-mediated cell attachment.</text>
</comment>
<comment type="miscellaneous">
    <text>It is possible that the segments of clustered carboxyl groups mediate the strong binding to hydroxyapatite.</text>
</comment>
<organism>
    <name type="scientific">Mus musculus</name>
    <name type="common">Mouse</name>
    <dbReference type="NCBI Taxonomy" id="10090"/>
    <lineage>
        <taxon>Eukaryota</taxon>
        <taxon>Metazoa</taxon>
        <taxon>Chordata</taxon>
        <taxon>Craniata</taxon>
        <taxon>Vertebrata</taxon>
        <taxon>Euteleostomi</taxon>
        <taxon>Mammalia</taxon>
        <taxon>Eutheria</taxon>
        <taxon>Euarchontoglires</taxon>
        <taxon>Glires</taxon>
        <taxon>Rodentia</taxon>
        <taxon>Myomorpha</taxon>
        <taxon>Muroidea</taxon>
        <taxon>Muridae</taxon>
        <taxon>Murinae</taxon>
        <taxon>Mus</taxon>
        <taxon>Mus</taxon>
    </lineage>
</organism>
<feature type="signal peptide" evidence="3">
    <location>
        <begin position="1"/>
        <end position="16"/>
    </location>
</feature>
<feature type="chain" id="PRO_0000020331" description="Integrin-binding sialoprotein">
    <location>
        <begin position="17"/>
        <end position="324"/>
    </location>
</feature>
<feature type="region of interest" description="Disordered" evidence="4">
    <location>
        <begin position="60"/>
        <end position="228"/>
    </location>
</feature>
<feature type="region of interest" description="Disordered" evidence="4">
    <location>
        <begin position="243"/>
        <end position="263"/>
    </location>
</feature>
<feature type="short sequence motif" description="Integrin-binding motif" evidence="1">
    <location>
        <begin position="293"/>
        <end position="295"/>
    </location>
</feature>
<feature type="compositionally biased region" description="Acidic residues" evidence="4">
    <location>
        <begin position="66"/>
        <end position="105"/>
    </location>
</feature>
<feature type="compositionally biased region" description="Polar residues" evidence="4">
    <location>
        <begin position="106"/>
        <end position="130"/>
    </location>
</feature>
<feature type="compositionally biased region" description="Basic and acidic residues" evidence="4">
    <location>
        <begin position="141"/>
        <end position="154"/>
    </location>
</feature>
<feature type="compositionally biased region" description="Acidic residues" evidence="4">
    <location>
        <begin position="155"/>
        <end position="179"/>
    </location>
</feature>
<feature type="compositionally biased region" description="Acidic residues" evidence="4">
    <location>
        <begin position="203"/>
        <end position="213"/>
    </location>
</feature>
<feature type="compositionally biased region" description="Polar residues" evidence="4">
    <location>
        <begin position="253"/>
        <end position="263"/>
    </location>
</feature>
<feature type="modified residue" description="Phosphoserine" evidence="2">
    <location>
        <position position="31"/>
    </location>
</feature>
<feature type="modified residue" description="Phosphoserine" evidence="2">
    <location>
        <position position="67"/>
    </location>
</feature>
<feature type="modified residue" description="Phosphoserine" evidence="2">
    <location>
        <position position="75"/>
    </location>
</feature>
<feature type="modified residue" description="Phosphoserine" evidence="2">
    <location>
        <position position="76"/>
    </location>
</feature>
<feature type="modified residue" description="Phosphoserine" evidence="2">
    <location>
        <position position="95"/>
    </location>
</feature>
<feature type="modified residue" description="Phosphoserine" evidence="2">
    <location>
        <position position="155"/>
    </location>
</feature>
<feature type="modified residue" description="Sulfotyrosine" evidence="1">
    <location>
        <position position="320"/>
    </location>
</feature>
<feature type="modified residue" description="Sulfotyrosine" evidence="1">
    <location>
        <position position="321"/>
    </location>
</feature>
<feature type="glycosylation site" description="N-linked (GlcNAc...) asparagine" evidence="3">
    <location>
        <position position="107"/>
    </location>
</feature>
<feature type="glycosylation site" description="N-linked (GlcNAc...) asparagine" evidence="3">
    <location>
        <position position="183"/>
    </location>
</feature>
<feature type="glycosylation site" description="N-linked (GlcNAc...) asparagine" evidence="3">
    <location>
        <position position="188"/>
    </location>
</feature>
<feature type="glycosylation site" description="N-linked (GlcNAc...) asparagine" evidence="3">
    <location>
        <position position="196"/>
    </location>
</feature>
<feature type="sequence conflict" description="In Ref. 2; AAA37326." evidence="5" ref="2">
    <original>G</original>
    <variation>C</variation>
    <location>
        <position position="73"/>
    </location>
</feature>
<feature type="sequence conflict" description="In Ref. 1; AAA21726 and 2; AAA37326." evidence="5" ref="1 2">
    <original>S</original>
    <variation>A</variation>
    <location>
        <position position="108"/>
    </location>
</feature>
<feature type="sequence conflict" description="In Ref. 2; AAA37326." evidence="5" ref="2">
    <original>I</original>
    <variation>V</variation>
    <location>
        <position position="259"/>
    </location>
</feature>
<accession>Q61711</accession>
<accession>Q61363</accession>
<accession>Q80VR6</accession>
<proteinExistence type="evidence at transcript level"/>
<name>SIAL_MOUSE</name>
<dbReference type="EMBL" id="L20232">
    <property type="protein sequence ID" value="AAA21726.1"/>
    <property type="molecule type" value="mRNA"/>
</dbReference>
<dbReference type="EMBL" id="L23801">
    <property type="protein sequence ID" value="AAA37326.1"/>
    <property type="molecule type" value="mRNA"/>
</dbReference>
<dbReference type="EMBL" id="AK132371">
    <property type="protein sequence ID" value="BAE21132.1"/>
    <property type="molecule type" value="mRNA"/>
</dbReference>
<dbReference type="EMBL" id="BC045143">
    <property type="protein sequence ID" value="AAH45143.1"/>
    <property type="molecule type" value="mRNA"/>
</dbReference>
<dbReference type="EMBL" id="CH466529">
    <property type="protein sequence ID" value="EDL20226.1"/>
    <property type="molecule type" value="Genomic_DNA"/>
</dbReference>
<dbReference type="CCDS" id="CCDS19485.1"/>
<dbReference type="PIR" id="I49768">
    <property type="entry name" value="I49768"/>
</dbReference>
<dbReference type="RefSeq" id="NP_032344.2">
    <property type="nucleotide sequence ID" value="NM_008318.3"/>
</dbReference>
<dbReference type="SMR" id="Q61711"/>
<dbReference type="FunCoup" id="Q61711">
    <property type="interactions" value="381"/>
</dbReference>
<dbReference type="IntAct" id="Q61711">
    <property type="interactions" value="1"/>
</dbReference>
<dbReference type="MINT" id="Q61711"/>
<dbReference type="STRING" id="10090.ENSMUSP00000031246"/>
<dbReference type="GlyCosmos" id="Q61711">
    <property type="glycosylation" value="4 sites, No reported glycans"/>
</dbReference>
<dbReference type="GlyGen" id="Q61711">
    <property type="glycosylation" value="4 sites"/>
</dbReference>
<dbReference type="PhosphoSitePlus" id="Q61711"/>
<dbReference type="jPOST" id="Q61711"/>
<dbReference type="PaxDb" id="10090-ENSMUSP00000031246"/>
<dbReference type="ProteomicsDB" id="261362"/>
<dbReference type="Antibodypedia" id="14494">
    <property type="antibodies" value="380 antibodies from 33 providers"/>
</dbReference>
<dbReference type="DNASU" id="15891"/>
<dbReference type="Ensembl" id="ENSMUST00000031246.9">
    <property type="protein sequence ID" value="ENSMUSP00000031246.9"/>
    <property type="gene ID" value="ENSMUSG00000029306.9"/>
</dbReference>
<dbReference type="GeneID" id="15891"/>
<dbReference type="KEGG" id="mmu:15891"/>
<dbReference type="UCSC" id="uc008ykg.2">
    <property type="organism name" value="mouse"/>
</dbReference>
<dbReference type="AGR" id="MGI:96389"/>
<dbReference type="CTD" id="3381"/>
<dbReference type="MGI" id="MGI:96389">
    <property type="gene designation" value="Ibsp"/>
</dbReference>
<dbReference type="VEuPathDB" id="HostDB:ENSMUSG00000029306"/>
<dbReference type="eggNOG" id="KOG1181">
    <property type="taxonomic scope" value="Eukaryota"/>
</dbReference>
<dbReference type="GeneTree" id="ENSGT00390000002485"/>
<dbReference type="HOGENOM" id="CLU_076119_0_0_1"/>
<dbReference type="InParanoid" id="Q61711"/>
<dbReference type="OMA" id="HAYFYPH"/>
<dbReference type="OrthoDB" id="9909090at2759"/>
<dbReference type="TreeFam" id="TF338678"/>
<dbReference type="Reactome" id="R-MMU-216083">
    <property type="pathway name" value="Integrin cell surface interactions"/>
</dbReference>
<dbReference type="BioGRID-ORCS" id="15891">
    <property type="hits" value="2 hits in 78 CRISPR screens"/>
</dbReference>
<dbReference type="PRO" id="PR:Q61711"/>
<dbReference type="Proteomes" id="UP000000589">
    <property type="component" value="Chromosome 5"/>
</dbReference>
<dbReference type="RNAct" id="Q61711">
    <property type="molecule type" value="protein"/>
</dbReference>
<dbReference type="Bgee" id="ENSMUSG00000029306">
    <property type="expression patterns" value="Expressed in secondary palatal shelf and 104 other cell types or tissues"/>
</dbReference>
<dbReference type="GO" id="GO:0005615">
    <property type="term" value="C:extracellular space"/>
    <property type="evidence" value="ECO:0000250"/>
    <property type="project" value="UniProtKB"/>
</dbReference>
<dbReference type="GO" id="GO:0031982">
    <property type="term" value="C:vesicle"/>
    <property type="evidence" value="ECO:0000250"/>
    <property type="project" value="UniProtKB"/>
</dbReference>
<dbReference type="GO" id="GO:0005178">
    <property type="term" value="F:integrin binding"/>
    <property type="evidence" value="ECO:0007669"/>
    <property type="project" value="Ensembl"/>
</dbReference>
<dbReference type="GO" id="GO:0036094">
    <property type="term" value="F:small molecule binding"/>
    <property type="evidence" value="ECO:0007669"/>
    <property type="project" value="Ensembl"/>
</dbReference>
<dbReference type="GO" id="GO:0030282">
    <property type="term" value="P:bone mineralization"/>
    <property type="evidence" value="ECO:0000315"/>
    <property type="project" value="MGI"/>
</dbReference>
<dbReference type="GO" id="GO:0007155">
    <property type="term" value="P:cell adhesion"/>
    <property type="evidence" value="ECO:0000250"/>
    <property type="project" value="UniProtKB"/>
</dbReference>
<dbReference type="GO" id="GO:0071363">
    <property type="term" value="P:cellular response to growth factor stimulus"/>
    <property type="evidence" value="ECO:0000314"/>
    <property type="project" value="MGI"/>
</dbReference>
<dbReference type="GO" id="GO:0030198">
    <property type="term" value="P:extracellular matrix organization"/>
    <property type="evidence" value="ECO:0000314"/>
    <property type="project" value="MGI"/>
</dbReference>
<dbReference type="GO" id="GO:0045785">
    <property type="term" value="P:positive regulation of cell adhesion"/>
    <property type="evidence" value="ECO:0007669"/>
    <property type="project" value="Ensembl"/>
</dbReference>
<dbReference type="InterPro" id="IPR008412">
    <property type="entry name" value="IBSP"/>
</dbReference>
<dbReference type="PANTHER" id="PTHR10345">
    <property type="entry name" value="BONE SIALOPROTEIN 2"/>
    <property type="match status" value="1"/>
</dbReference>
<dbReference type="PANTHER" id="PTHR10345:SF0">
    <property type="entry name" value="BONE SIALOPROTEIN 2"/>
    <property type="match status" value="1"/>
</dbReference>
<dbReference type="Pfam" id="PF05432">
    <property type="entry name" value="BSP_II"/>
    <property type="match status" value="1"/>
</dbReference>
<evidence type="ECO:0000250" key="1">
    <source>
        <dbReference type="UniProtKB" id="P21815"/>
    </source>
</evidence>
<evidence type="ECO:0000250" key="2">
    <source>
        <dbReference type="UniProtKB" id="Q28862"/>
    </source>
</evidence>
<evidence type="ECO:0000255" key="3"/>
<evidence type="ECO:0000256" key="4">
    <source>
        <dbReference type="SAM" id="MobiDB-lite"/>
    </source>
</evidence>
<evidence type="ECO:0000305" key="5"/>
<reference key="1">
    <citation type="journal article" date="1994" name="Mamm. Genome">
        <title>Murine bone sialoprotein (BSP): cDNA cloning, mRNA expression, and genetic mapping.</title>
        <authorList>
            <person name="Young M.F."/>
            <person name="Ibaraki K."/>
            <person name="Kerr J.M."/>
            <person name="Lyu M.S."/>
            <person name="Kozak C.A."/>
        </authorList>
    </citation>
    <scope>NUCLEOTIDE SEQUENCE [MRNA]</scope>
</reference>
<reference key="2">
    <citation type="submission" date="1993-08" db="EMBL/GenBank/DDBJ databases">
        <title>Sequence of mouse bone sialoprotein II (BSP) cDNA.</title>
        <authorList>
            <person name="Wuyts W."/>
            <person name="Tylzanowski P."/>
            <person name="Merregaert J."/>
        </authorList>
    </citation>
    <scope>NUCLEOTIDE SEQUENCE [MRNA]</scope>
    <source>
        <tissue>Bone</tissue>
    </source>
</reference>
<reference key="3">
    <citation type="journal article" date="2005" name="Science">
        <title>The transcriptional landscape of the mammalian genome.</title>
        <authorList>
            <person name="Carninci P."/>
            <person name="Kasukawa T."/>
            <person name="Katayama S."/>
            <person name="Gough J."/>
            <person name="Frith M.C."/>
            <person name="Maeda N."/>
            <person name="Oyama R."/>
            <person name="Ravasi T."/>
            <person name="Lenhard B."/>
            <person name="Wells C."/>
            <person name="Kodzius R."/>
            <person name="Shimokawa K."/>
            <person name="Bajic V.B."/>
            <person name="Brenner S.E."/>
            <person name="Batalov S."/>
            <person name="Forrest A.R."/>
            <person name="Zavolan M."/>
            <person name="Davis M.J."/>
            <person name="Wilming L.G."/>
            <person name="Aidinis V."/>
            <person name="Allen J.E."/>
            <person name="Ambesi-Impiombato A."/>
            <person name="Apweiler R."/>
            <person name="Aturaliya R.N."/>
            <person name="Bailey T.L."/>
            <person name="Bansal M."/>
            <person name="Baxter L."/>
            <person name="Beisel K.W."/>
            <person name="Bersano T."/>
            <person name="Bono H."/>
            <person name="Chalk A.M."/>
            <person name="Chiu K.P."/>
            <person name="Choudhary V."/>
            <person name="Christoffels A."/>
            <person name="Clutterbuck D.R."/>
            <person name="Crowe M.L."/>
            <person name="Dalla E."/>
            <person name="Dalrymple B.P."/>
            <person name="de Bono B."/>
            <person name="Della Gatta G."/>
            <person name="di Bernardo D."/>
            <person name="Down T."/>
            <person name="Engstrom P."/>
            <person name="Fagiolini M."/>
            <person name="Faulkner G."/>
            <person name="Fletcher C.F."/>
            <person name="Fukushima T."/>
            <person name="Furuno M."/>
            <person name="Futaki S."/>
            <person name="Gariboldi M."/>
            <person name="Georgii-Hemming P."/>
            <person name="Gingeras T.R."/>
            <person name="Gojobori T."/>
            <person name="Green R.E."/>
            <person name="Gustincich S."/>
            <person name="Harbers M."/>
            <person name="Hayashi Y."/>
            <person name="Hensch T.K."/>
            <person name="Hirokawa N."/>
            <person name="Hill D."/>
            <person name="Huminiecki L."/>
            <person name="Iacono M."/>
            <person name="Ikeo K."/>
            <person name="Iwama A."/>
            <person name="Ishikawa T."/>
            <person name="Jakt M."/>
            <person name="Kanapin A."/>
            <person name="Katoh M."/>
            <person name="Kawasawa Y."/>
            <person name="Kelso J."/>
            <person name="Kitamura H."/>
            <person name="Kitano H."/>
            <person name="Kollias G."/>
            <person name="Krishnan S.P."/>
            <person name="Kruger A."/>
            <person name="Kummerfeld S.K."/>
            <person name="Kurochkin I.V."/>
            <person name="Lareau L.F."/>
            <person name="Lazarevic D."/>
            <person name="Lipovich L."/>
            <person name="Liu J."/>
            <person name="Liuni S."/>
            <person name="McWilliam S."/>
            <person name="Madan Babu M."/>
            <person name="Madera M."/>
            <person name="Marchionni L."/>
            <person name="Matsuda H."/>
            <person name="Matsuzawa S."/>
            <person name="Miki H."/>
            <person name="Mignone F."/>
            <person name="Miyake S."/>
            <person name="Morris K."/>
            <person name="Mottagui-Tabar S."/>
            <person name="Mulder N."/>
            <person name="Nakano N."/>
            <person name="Nakauchi H."/>
            <person name="Ng P."/>
            <person name="Nilsson R."/>
            <person name="Nishiguchi S."/>
            <person name="Nishikawa S."/>
            <person name="Nori F."/>
            <person name="Ohara O."/>
            <person name="Okazaki Y."/>
            <person name="Orlando V."/>
            <person name="Pang K.C."/>
            <person name="Pavan W.J."/>
            <person name="Pavesi G."/>
            <person name="Pesole G."/>
            <person name="Petrovsky N."/>
            <person name="Piazza S."/>
            <person name="Reed J."/>
            <person name="Reid J.F."/>
            <person name="Ring B.Z."/>
            <person name="Ringwald M."/>
            <person name="Rost B."/>
            <person name="Ruan Y."/>
            <person name="Salzberg S.L."/>
            <person name="Sandelin A."/>
            <person name="Schneider C."/>
            <person name="Schoenbach C."/>
            <person name="Sekiguchi K."/>
            <person name="Semple C.A."/>
            <person name="Seno S."/>
            <person name="Sessa L."/>
            <person name="Sheng Y."/>
            <person name="Shibata Y."/>
            <person name="Shimada H."/>
            <person name="Shimada K."/>
            <person name="Silva D."/>
            <person name="Sinclair B."/>
            <person name="Sperling S."/>
            <person name="Stupka E."/>
            <person name="Sugiura K."/>
            <person name="Sultana R."/>
            <person name="Takenaka Y."/>
            <person name="Taki K."/>
            <person name="Tammoja K."/>
            <person name="Tan S.L."/>
            <person name="Tang S."/>
            <person name="Taylor M.S."/>
            <person name="Tegner J."/>
            <person name="Teichmann S.A."/>
            <person name="Ueda H.R."/>
            <person name="van Nimwegen E."/>
            <person name="Verardo R."/>
            <person name="Wei C.L."/>
            <person name="Yagi K."/>
            <person name="Yamanishi H."/>
            <person name="Zabarovsky E."/>
            <person name="Zhu S."/>
            <person name="Zimmer A."/>
            <person name="Hide W."/>
            <person name="Bult C."/>
            <person name="Grimmond S.M."/>
            <person name="Teasdale R.D."/>
            <person name="Liu E.T."/>
            <person name="Brusic V."/>
            <person name="Quackenbush J."/>
            <person name="Wahlestedt C."/>
            <person name="Mattick J.S."/>
            <person name="Hume D.A."/>
            <person name="Kai C."/>
            <person name="Sasaki D."/>
            <person name="Tomaru Y."/>
            <person name="Fukuda S."/>
            <person name="Kanamori-Katayama M."/>
            <person name="Suzuki M."/>
            <person name="Aoki J."/>
            <person name="Arakawa T."/>
            <person name="Iida J."/>
            <person name="Imamura K."/>
            <person name="Itoh M."/>
            <person name="Kato T."/>
            <person name="Kawaji H."/>
            <person name="Kawagashira N."/>
            <person name="Kawashima T."/>
            <person name="Kojima M."/>
            <person name="Kondo S."/>
            <person name="Konno H."/>
            <person name="Nakano K."/>
            <person name="Ninomiya N."/>
            <person name="Nishio T."/>
            <person name="Okada M."/>
            <person name="Plessy C."/>
            <person name="Shibata K."/>
            <person name="Shiraki T."/>
            <person name="Suzuki S."/>
            <person name="Tagami M."/>
            <person name="Waki K."/>
            <person name="Watahiki A."/>
            <person name="Okamura-Oho Y."/>
            <person name="Suzuki H."/>
            <person name="Kawai J."/>
            <person name="Hayashizaki Y."/>
        </authorList>
    </citation>
    <scope>NUCLEOTIDE SEQUENCE [LARGE SCALE MRNA]</scope>
    <source>
        <strain>C57BL/6J</strain>
        <tissue>Head</tissue>
    </source>
</reference>
<reference key="4">
    <citation type="submission" date="2005-07" db="EMBL/GenBank/DDBJ databases">
        <authorList>
            <person name="Mural R.J."/>
            <person name="Adams M.D."/>
            <person name="Myers E.W."/>
            <person name="Smith H.O."/>
            <person name="Venter J.C."/>
        </authorList>
    </citation>
    <scope>NUCLEOTIDE SEQUENCE [LARGE SCALE GENOMIC DNA]</scope>
</reference>
<reference key="5">
    <citation type="journal article" date="2004" name="Genome Res.">
        <title>The status, quality, and expansion of the NIH full-length cDNA project: the Mammalian Gene Collection (MGC).</title>
        <authorList>
            <consortium name="The MGC Project Team"/>
        </authorList>
    </citation>
    <scope>NUCLEOTIDE SEQUENCE [LARGE SCALE MRNA]</scope>
    <source>
        <tissue>Olfactory epithelium</tissue>
    </source>
</reference>
<protein>
    <recommendedName>
        <fullName evidence="5">Integrin-binding sialoprotein</fullName>
    </recommendedName>
    <alternativeName>
        <fullName evidence="5">Bone sialoprotein 2</fullName>
    </alternativeName>
    <alternativeName>
        <fullName>Bone sialoprotein II</fullName>
        <shortName>BSP II</shortName>
    </alternativeName>
    <alternativeName>
        <fullName>Cell-binding sialoprotein</fullName>
    </alternativeName>
</protein>